<feature type="chain" id="PRO_1000009558" description="tRNA-specific 2-thiouridylase MnmA">
    <location>
        <begin position="1"/>
        <end position="376"/>
    </location>
</feature>
<feature type="region of interest" description="Interaction with target base in tRNA" evidence="1">
    <location>
        <begin position="103"/>
        <end position="105"/>
    </location>
</feature>
<feature type="region of interest" description="Interaction with tRNA" evidence="1">
    <location>
        <begin position="154"/>
        <end position="156"/>
    </location>
</feature>
<feature type="region of interest" description="Interaction with tRNA" evidence="1">
    <location>
        <begin position="316"/>
        <end position="317"/>
    </location>
</feature>
<feature type="active site" description="Nucleophile" evidence="1">
    <location>
        <position position="108"/>
    </location>
</feature>
<feature type="active site" description="Cysteine persulfide intermediate" evidence="1">
    <location>
        <position position="204"/>
    </location>
</feature>
<feature type="binding site" evidence="1">
    <location>
        <begin position="17"/>
        <end position="24"/>
    </location>
    <ligand>
        <name>ATP</name>
        <dbReference type="ChEBI" id="CHEBI:30616"/>
    </ligand>
</feature>
<feature type="binding site" evidence="1">
    <location>
        <position position="43"/>
    </location>
    <ligand>
        <name>ATP</name>
        <dbReference type="ChEBI" id="CHEBI:30616"/>
    </ligand>
</feature>
<feature type="binding site" evidence="1">
    <location>
        <position position="132"/>
    </location>
    <ligand>
        <name>ATP</name>
        <dbReference type="ChEBI" id="CHEBI:30616"/>
    </ligand>
</feature>
<feature type="site" description="Interaction with tRNA" evidence="1">
    <location>
        <position position="133"/>
    </location>
</feature>
<feature type="site" description="Interaction with tRNA" evidence="1">
    <location>
        <position position="348"/>
    </location>
</feature>
<feature type="disulfide bond" description="Alternate" evidence="1">
    <location>
        <begin position="108"/>
        <end position="204"/>
    </location>
</feature>
<comment type="function">
    <text evidence="1">Catalyzes the 2-thiolation of uridine at the wobble position (U34) of tRNA, leading to the formation of s(2)U34.</text>
</comment>
<comment type="catalytic activity">
    <reaction evidence="1">
        <text>S-sulfanyl-L-cysteinyl-[protein] + uridine(34) in tRNA + AH2 + ATP = 2-thiouridine(34) in tRNA + L-cysteinyl-[protein] + A + AMP + diphosphate + H(+)</text>
        <dbReference type="Rhea" id="RHEA:47032"/>
        <dbReference type="Rhea" id="RHEA-COMP:10131"/>
        <dbReference type="Rhea" id="RHEA-COMP:11726"/>
        <dbReference type="Rhea" id="RHEA-COMP:11727"/>
        <dbReference type="Rhea" id="RHEA-COMP:11728"/>
        <dbReference type="ChEBI" id="CHEBI:13193"/>
        <dbReference type="ChEBI" id="CHEBI:15378"/>
        <dbReference type="ChEBI" id="CHEBI:17499"/>
        <dbReference type="ChEBI" id="CHEBI:29950"/>
        <dbReference type="ChEBI" id="CHEBI:30616"/>
        <dbReference type="ChEBI" id="CHEBI:33019"/>
        <dbReference type="ChEBI" id="CHEBI:61963"/>
        <dbReference type="ChEBI" id="CHEBI:65315"/>
        <dbReference type="ChEBI" id="CHEBI:87170"/>
        <dbReference type="ChEBI" id="CHEBI:456215"/>
        <dbReference type="EC" id="2.8.1.13"/>
    </reaction>
</comment>
<comment type="subcellular location">
    <subcellularLocation>
        <location evidence="1">Cytoplasm</location>
    </subcellularLocation>
</comment>
<comment type="similarity">
    <text evidence="1">Belongs to the MnmA/TRMU family.</text>
</comment>
<accession>Q4ZRK0</accession>
<protein>
    <recommendedName>
        <fullName evidence="1">tRNA-specific 2-thiouridylase MnmA</fullName>
        <ecNumber evidence="1">2.8.1.13</ecNumber>
    </recommendedName>
</protein>
<name>MNMA_PSEU2</name>
<sequence>MRDPAPSNSEMKRVIVGMSGGVDSSVSAVLLMEQGYQVEGLFMKNWEEDDGTEYCTAREDLADAQAVCDKIGIKLHTANFAAEYWDNVFEHFLEEYKAGRTPNPDILCNREIKFKAFLDYALMLGADLIATGHYVRRRDIDGRTELLKGLDPNKDQSYFLHAVGGEQIARTLFPVGELEKPEVRAIAEKHGLATAKKKDSTGICFIGERRFTDFLRQYLPAQPGEIKTTEGEVIGRHSGLMYHTIGQRQGLGIGGLKDASDDPWYVLVKDLENNELIVGQGNDHPWLFSRALVSSEIYWVNPIDLSSPRRLTAKVRYRQGDQPCTLEKTADGYRATFDDPQRAVTPGQSVVFYDGEICLGGGVIEIAEPWTTKDKR</sequence>
<organism>
    <name type="scientific">Pseudomonas syringae pv. syringae (strain B728a)</name>
    <dbReference type="NCBI Taxonomy" id="205918"/>
    <lineage>
        <taxon>Bacteria</taxon>
        <taxon>Pseudomonadati</taxon>
        <taxon>Pseudomonadota</taxon>
        <taxon>Gammaproteobacteria</taxon>
        <taxon>Pseudomonadales</taxon>
        <taxon>Pseudomonadaceae</taxon>
        <taxon>Pseudomonas</taxon>
        <taxon>Pseudomonas syringae</taxon>
    </lineage>
</organism>
<proteinExistence type="inferred from homology"/>
<evidence type="ECO:0000255" key="1">
    <source>
        <dbReference type="HAMAP-Rule" id="MF_00144"/>
    </source>
</evidence>
<reference key="1">
    <citation type="journal article" date="2005" name="Proc. Natl. Acad. Sci. U.S.A.">
        <title>Comparison of the complete genome sequences of Pseudomonas syringae pv. syringae B728a and pv. tomato DC3000.</title>
        <authorList>
            <person name="Feil H."/>
            <person name="Feil W.S."/>
            <person name="Chain P."/>
            <person name="Larimer F."/>
            <person name="Dibartolo G."/>
            <person name="Copeland A."/>
            <person name="Lykidis A."/>
            <person name="Trong S."/>
            <person name="Nolan M."/>
            <person name="Goltsman E."/>
            <person name="Thiel J."/>
            <person name="Malfatti S."/>
            <person name="Loper J.E."/>
            <person name="Lapidus A."/>
            <person name="Detter J.C."/>
            <person name="Land M."/>
            <person name="Richardson P.M."/>
            <person name="Kyrpides N.C."/>
            <person name="Ivanova N."/>
            <person name="Lindow S.E."/>
        </authorList>
    </citation>
    <scope>NUCLEOTIDE SEQUENCE [LARGE SCALE GENOMIC DNA]</scope>
    <source>
        <strain>B728a</strain>
    </source>
</reference>
<dbReference type="EC" id="2.8.1.13" evidence="1"/>
<dbReference type="EMBL" id="CP000075">
    <property type="protein sequence ID" value="AAY38222.1"/>
    <property type="molecule type" value="Genomic_DNA"/>
</dbReference>
<dbReference type="RefSeq" id="WP_011268273.1">
    <property type="nucleotide sequence ID" value="NC_007005.1"/>
</dbReference>
<dbReference type="RefSeq" id="YP_236260.1">
    <property type="nucleotide sequence ID" value="NC_007005.1"/>
</dbReference>
<dbReference type="SMR" id="Q4ZRK0"/>
<dbReference type="STRING" id="205918.Psyr_3190"/>
<dbReference type="KEGG" id="psb:Psyr_3190"/>
<dbReference type="PATRIC" id="fig|205918.7.peg.3256"/>
<dbReference type="eggNOG" id="COG0482">
    <property type="taxonomic scope" value="Bacteria"/>
</dbReference>
<dbReference type="HOGENOM" id="CLU_035188_1_0_6"/>
<dbReference type="OrthoDB" id="9800696at2"/>
<dbReference type="Proteomes" id="UP000000426">
    <property type="component" value="Chromosome"/>
</dbReference>
<dbReference type="GO" id="GO:0005737">
    <property type="term" value="C:cytoplasm"/>
    <property type="evidence" value="ECO:0007669"/>
    <property type="project" value="UniProtKB-SubCell"/>
</dbReference>
<dbReference type="GO" id="GO:0005524">
    <property type="term" value="F:ATP binding"/>
    <property type="evidence" value="ECO:0007669"/>
    <property type="project" value="UniProtKB-KW"/>
</dbReference>
<dbReference type="GO" id="GO:0000049">
    <property type="term" value="F:tRNA binding"/>
    <property type="evidence" value="ECO:0007669"/>
    <property type="project" value="UniProtKB-KW"/>
</dbReference>
<dbReference type="GO" id="GO:0103016">
    <property type="term" value="F:tRNA-uridine 2-sulfurtransferase activity"/>
    <property type="evidence" value="ECO:0007669"/>
    <property type="project" value="UniProtKB-EC"/>
</dbReference>
<dbReference type="GO" id="GO:0002143">
    <property type="term" value="P:tRNA wobble position uridine thiolation"/>
    <property type="evidence" value="ECO:0007669"/>
    <property type="project" value="TreeGrafter"/>
</dbReference>
<dbReference type="CDD" id="cd01998">
    <property type="entry name" value="MnmA_TRMU-like"/>
    <property type="match status" value="1"/>
</dbReference>
<dbReference type="FunFam" id="2.30.30.280:FF:000001">
    <property type="entry name" value="tRNA-specific 2-thiouridylase MnmA"/>
    <property type="match status" value="1"/>
</dbReference>
<dbReference type="FunFam" id="2.40.30.10:FF:000023">
    <property type="entry name" value="tRNA-specific 2-thiouridylase MnmA"/>
    <property type="match status" value="1"/>
</dbReference>
<dbReference type="FunFam" id="3.40.50.620:FF:000004">
    <property type="entry name" value="tRNA-specific 2-thiouridylase MnmA"/>
    <property type="match status" value="1"/>
</dbReference>
<dbReference type="Gene3D" id="2.30.30.280">
    <property type="entry name" value="Adenine nucleotide alpha hydrolases-like domains"/>
    <property type="match status" value="1"/>
</dbReference>
<dbReference type="Gene3D" id="3.40.50.620">
    <property type="entry name" value="HUPs"/>
    <property type="match status" value="1"/>
</dbReference>
<dbReference type="Gene3D" id="2.40.30.10">
    <property type="entry name" value="Translation factors"/>
    <property type="match status" value="1"/>
</dbReference>
<dbReference type="HAMAP" id="MF_00144">
    <property type="entry name" value="tRNA_thiouridyl_MnmA"/>
    <property type="match status" value="1"/>
</dbReference>
<dbReference type="InterPro" id="IPR004506">
    <property type="entry name" value="MnmA-like"/>
</dbReference>
<dbReference type="InterPro" id="IPR046885">
    <property type="entry name" value="MnmA-like_C"/>
</dbReference>
<dbReference type="InterPro" id="IPR046884">
    <property type="entry name" value="MnmA-like_central"/>
</dbReference>
<dbReference type="InterPro" id="IPR023382">
    <property type="entry name" value="MnmA-like_central_sf"/>
</dbReference>
<dbReference type="InterPro" id="IPR014729">
    <property type="entry name" value="Rossmann-like_a/b/a_fold"/>
</dbReference>
<dbReference type="NCBIfam" id="NF001138">
    <property type="entry name" value="PRK00143.1"/>
    <property type="match status" value="1"/>
</dbReference>
<dbReference type="NCBIfam" id="TIGR00420">
    <property type="entry name" value="trmU"/>
    <property type="match status" value="1"/>
</dbReference>
<dbReference type="PANTHER" id="PTHR11933:SF5">
    <property type="entry name" value="MITOCHONDRIAL TRNA-SPECIFIC 2-THIOURIDYLASE 1"/>
    <property type="match status" value="1"/>
</dbReference>
<dbReference type="PANTHER" id="PTHR11933">
    <property type="entry name" value="TRNA 5-METHYLAMINOMETHYL-2-THIOURIDYLATE -METHYLTRANSFERASE"/>
    <property type="match status" value="1"/>
</dbReference>
<dbReference type="Pfam" id="PF03054">
    <property type="entry name" value="tRNA_Me_trans"/>
    <property type="match status" value="1"/>
</dbReference>
<dbReference type="Pfam" id="PF20258">
    <property type="entry name" value="tRNA_Me_trans_C"/>
    <property type="match status" value="1"/>
</dbReference>
<dbReference type="Pfam" id="PF20259">
    <property type="entry name" value="tRNA_Me_trans_M"/>
    <property type="match status" value="1"/>
</dbReference>
<dbReference type="SUPFAM" id="SSF52402">
    <property type="entry name" value="Adenine nucleotide alpha hydrolases-like"/>
    <property type="match status" value="1"/>
</dbReference>
<keyword id="KW-0067">ATP-binding</keyword>
<keyword id="KW-0963">Cytoplasm</keyword>
<keyword id="KW-1015">Disulfide bond</keyword>
<keyword id="KW-0547">Nucleotide-binding</keyword>
<keyword id="KW-0694">RNA-binding</keyword>
<keyword id="KW-0808">Transferase</keyword>
<keyword id="KW-0819">tRNA processing</keyword>
<keyword id="KW-0820">tRNA-binding</keyword>
<gene>
    <name evidence="1" type="primary">mnmA</name>
    <name type="synonym">trmU</name>
    <name type="ordered locus">Psyr_3190</name>
</gene>